<dbReference type="EC" id="2.6.1.9" evidence="1"/>
<dbReference type="EMBL" id="AP006840">
    <property type="protein sequence ID" value="BAD41816.1"/>
    <property type="molecule type" value="Genomic_DNA"/>
</dbReference>
<dbReference type="RefSeq" id="WP_011196950.1">
    <property type="nucleotide sequence ID" value="NC_006177.1"/>
</dbReference>
<dbReference type="SMR" id="Q67KI2"/>
<dbReference type="STRING" id="292459.STH2831"/>
<dbReference type="KEGG" id="sth:STH2831"/>
<dbReference type="eggNOG" id="COG0079">
    <property type="taxonomic scope" value="Bacteria"/>
</dbReference>
<dbReference type="HOGENOM" id="CLU_017584_3_3_9"/>
<dbReference type="OrthoDB" id="9813612at2"/>
<dbReference type="UniPathway" id="UPA00031">
    <property type="reaction ID" value="UER00012"/>
</dbReference>
<dbReference type="Proteomes" id="UP000000417">
    <property type="component" value="Chromosome"/>
</dbReference>
<dbReference type="GO" id="GO:0004400">
    <property type="term" value="F:histidinol-phosphate transaminase activity"/>
    <property type="evidence" value="ECO:0007669"/>
    <property type="project" value="UniProtKB-UniRule"/>
</dbReference>
<dbReference type="GO" id="GO:0030170">
    <property type="term" value="F:pyridoxal phosphate binding"/>
    <property type="evidence" value="ECO:0007669"/>
    <property type="project" value="InterPro"/>
</dbReference>
<dbReference type="GO" id="GO:0000105">
    <property type="term" value="P:L-histidine biosynthetic process"/>
    <property type="evidence" value="ECO:0007669"/>
    <property type="project" value="UniProtKB-UniRule"/>
</dbReference>
<dbReference type="CDD" id="cd00609">
    <property type="entry name" value="AAT_like"/>
    <property type="match status" value="1"/>
</dbReference>
<dbReference type="Gene3D" id="3.90.1150.10">
    <property type="entry name" value="Aspartate Aminotransferase, domain 1"/>
    <property type="match status" value="1"/>
</dbReference>
<dbReference type="Gene3D" id="3.40.640.10">
    <property type="entry name" value="Type I PLP-dependent aspartate aminotransferase-like (Major domain)"/>
    <property type="match status" value="1"/>
</dbReference>
<dbReference type="HAMAP" id="MF_01023">
    <property type="entry name" value="HisC_aminotrans_2"/>
    <property type="match status" value="1"/>
</dbReference>
<dbReference type="InterPro" id="IPR004839">
    <property type="entry name" value="Aminotransferase_I/II_large"/>
</dbReference>
<dbReference type="InterPro" id="IPR005861">
    <property type="entry name" value="HisP_aminotrans"/>
</dbReference>
<dbReference type="InterPro" id="IPR050106">
    <property type="entry name" value="HistidinolP_aminotransfase"/>
</dbReference>
<dbReference type="InterPro" id="IPR015424">
    <property type="entry name" value="PyrdxlP-dep_Trfase"/>
</dbReference>
<dbReference type="InterPro" id="IPR015421">
    <property type="entry name" value="PyrdxlP-dep_Trfase_major"/>
</dbReference>
<dbReference type="InterPro" id="IPR015422">
    <property type="entry name" value="PyrdxlP-dep_Trfase_small"/>
</dbReference>
<dbReference type="NCBIfam" id="TIGR01141">
    <property type="entry name" value="hisC"/>
    <property type="match status" value="1"/>
</dbReference>
<dbReference type="PANTHER" id="PTHR43643:SF6">
    <property type="entry name" value="HISTIDINOL-PHOSPHATE AMINOTRANSFERASE"/>
    <property type="match status" value="1"/>
</dbReference>
<dbReference type="PANTHER" id="PTHR43643">
    <property type="entry name" value="HISTIDINOL-PHOSPHATE AMINOTRANSFERASE 2"/>
    <property type="match status" value="1"/>
</dbReference>
<dbReference type="Pfam" id="PF00155">
    <property type="entry name" value="Aminotran_1_2"/>
    <property type="match status" value="1"/>
</dbReference>
<dbReference type="SUPFAM" id="SSF53383">
    <property type="entry name" value="PLP-dependent transferases"/>
    <property type="match status" value="1"/>
</dbReference>
<name>HIS8_SYMTH</name>
<gene>
    <name evidence="1" type="primary">hisC</name>
    <name type="ordered locus">STH2831</name>
</gene>
<proteinExistence type="inferred from homology"/>
<accession>Q67KI2</accession>
<keyword id="KW-0028">Amino-acid biosynthesis</keyword>
<keyword id="KW-0032">Aminotransferase</keyword>
<keyword id="KW-0368">Histidine biosynthesis</keyword>
<keyword id="KW-0663">Pyridoxal phosphate</keyword>
<keyword id="KW-1185">Reference proteome</keyword>
<keyword id="KW-0808">Transferase</keyword>
<organism>
    <name type="scientific">Symbiobacterium thermophilum (strain DSM 24528 / JCM 14929 / IAM 14863 / T)</name>
    <dbReference type="NCBI Taxonomy" id="292459"/>
    <lineage>
        <taxon>Bacteria</taxon>
        <taxon>Bacillati</taxon>
        <taxon>Bacillota</taxon>
        <taxon>Clostridia</taxon>
        <taxon>Eubacteriales</taxon>
        <taxon>Symbiobacteriaceae</taxon>
        <taxon>Symbiobacterium</taxon>
    </lineage>
</organism>
<comment type="catalytic activity">
    <reaction evidence="1">
        <text>L-histidinol phosphate + 2-oxoglutarate = 3-(imidazol-4-yl)-2-oxopropyl phosphate + L-glutamate</text>
        <dbReference type="Rhea" id="RHEA:23744"/>
        <dbReference type="ChEBI" id="CHEBI:16810"/>
        <dbReference type="ChEBI" id="CHEBI:29985"/>
        <dbReference type="ChEBI" id="CHEBI:57766"/>
        <dbReference type="ChEBI" id="CHEBI:57980"/>
        <dbReference type="EC" id="2.6.1.9"/>
    </reaction>
</comment>
<comment type="cofactor">
    <cofactor evidence="1">
        <name>pyridoxal 5'-phosphate</name>
        <dbReference type="ChEBI" id="CHEBI:597326"/>
    </cofactor>
</comment>
<comment type="pathway">
    <text evidence="1">Amino-acid biosynthesis; L-histidine biosynthesis; L-histidine from 5-phospho-alpha-D-ribose 1-diphosphate: step 7/9.</text>
</comment>
<comment type="subunit">
    <text evidence="1">Homodimer.</text>
</comment>
<comment type="similarity">
    <text evidence="1">Belongs to the class-II pyridoxal-phosphate-dependent aminotransferase family. Histidinol-phosphate aminotransferase subfamily.</text>
</comment>
<evidence type="ECO:0000255" key="1">
    <source>
        <dbReference type="HAMAP-Rule" id="MF_01023"/>
    </source>
</evidence>
<reference key="1">
    <citation type="journal article" date="2004" name="Nucleic Acids Res.">
        <title>Genome sequence of Symbiobacterium thermophilum, an uncultivable bacterium that depends on microbial commensalism.</title>
        <authorList>
            <person name="Ueda K."/>
            <person name="Yamashita A."/>
            <person name="Ishikawa J."/>
            <person name="Shimada M."/>
            <person name="Watsuji T."/>
            <person name="Morimura K."/>
            <person name="Ikeda H."/>
            <person name="Hattori M."/>
            <person name="Beppu T."/>
        </authorList>
    </citation>
    <scope>NUCLEOTIDE SEQUENCE [LARGE SCALE GENOMIC DNA]</scope>
    <source>
        <strain>DSM 24528 / JCM 14929 / IAM 14863 / T</strain>
    </source>
</reference>
<sequence length="361" mass="39538">MSSVRTAVRRMKPYVPGKPVEDVQRELGLHDLVKLNQNENPLGPSPRAVAAARAAMAQVHTYPEGTARRLRERLAQMWNLPADWFLIGNGSDEVFRLLAEVYLEPGDRVVVPEPSFAAYRFVAELMGAEVVAVPLAGWTMDLPAMAEAAARGAKLLFLCRPNNPTGTVFAEADLRAALERVPPSTLVVVDEAYREFDETPFDSRALVQDYPNVVIARTFSKIYGMAGFRLGYGVMRPEVLAPLYTARDPFSVNGLAVAAGLAALDDVEHVERTRALTREGKAYLYAAFQRLGLGYVPSEANFVLFDAGRPAAEVFDALLRRGVLVRPCGSFGLPDHLRVTVGTPEQNRRFVEALKAALGEG</sequence>
<feature type="chain" id="PRO_0000153464" description="Histidinol-phosphate aminotransferase">
    <location>
        <begin position="1"/>
        <end position="361"/>
    </location>
</feature>
<feature type="modified residue" description="N6-(pyridoxal phosphate)lysine" evidence="1">
    <location>
        <position position="221"/>
    </location>
</feature>
<protein>
    <recommendedName>
        <fullName evidence="1">Histidinol-phosphate aminotransferase</fullName>
        <ecNumber evidence="1">2.6.1.9</ecNumber>
    </recommendedName>
    <alternativeName>
        <fullName evidence="1">Imidazole acetol-phosphate transaminase</fullName>
    </alternativeName>
</protein>